<name>Y439_MYCGE</name>
<sequence>MKLRKIFLLPLISLSTLSVACSSTDPGLEKAQAYFQRNNIELSKNNAVTFLKKGYSSDKEEVINTVFASWKTTLLDYQLLEKPLDYSRFAKAFGVNKSKEDVTPNISAKGLYFDETYPGISGQIALVLGVKSQKVVNFQYSWKNNLDFKVQIHLKMTGIVGSDNTSTSLIKSFLASTSGVSESDFTGDKANFDGDVIFTYTPPTDNRRVSESTFSSIPASINFPFDIKIDMSTSHEKLNLLLSTNEQVKKIRTRTFKGKSIDLLPFFYYTLL</sequence>
<organism>
    <name type="scientific">Mycoplasma genitalium (strain ATCC 33530 / DSM 19775 / NCTC 10195 / G37)</name>
    <name type="common">Mycoplasmoides genitalium</name>
    <dbReference type="NCBI Taxonomy" id="243273"/>
    <lineage>
        <taxon>Bacteria</taxon>
        <taxon>Bacillati</taxon>
        <taxon>Mycoplasmatota</taxon>
        <taxon>Mycoplasmoidales</taxon>
        <taxon>Mycoplasmoidaceae</taxon>
        <taxon>Mycoplasmoides</taxon>
    </lineage>
</organism>
<feature type="signal peptide" evidence="1">
    <location>
        <begin position="1"/>
        <end position="20"/>
    </location>
</feature>
<feature type="chain" id="PRO_0000014042" description="Uncharacterized lipoprotein MG439">
    <location>
        <begin position="21"/>
        <end position="272"/>
    </location>
</feature>
<feature type="lipid moiety-binding region" description="N-palmitoyl cysteine" evidence="1">
    <location>
        <position position="21"/>
    </location>
</feature>
<feature type="lipid moiety-binding region" description="S-diacylglycerol cysteine" evidence="1">
    <location>
        <position position="21"/>
    </location>
</feature>
<comment type="subcellular location">
    <subcellularLocation>
        <location evidence="1">Cell membrane</location>
        <topology evidence="1">Lipid-anchor</topology>
    </subcellularLocation>
</comment>
<comment type="similarity">
    <text evidence="2">Belongs to the MG439/MG440 family.</text>
</comment>
<accession>P47677</accession>
<reference key="1">
    <citation type="journal article" date="1995" name="Science">
        <title>The minimal gene complement of Mycoplasma genitalium.</title>
        <authorList>
            <person name="Fraser C.M."/>
            <person name="Gocayne J.D."/>
            <person name="White O."/>
            <person name="Adams M.D."/>
            <person name="Clayton R.A."/>
            <person name="Fleischmann R.D."/>
            <person name="Bult C.J."/>
            <person name="Kerlavage A.R."/>
            <person name="Sutton G.G."/>
            <person name="Kelley J.M."/>
            <person name="Fritchman J.L."/>
            <person name="Weidman J.F."/>
            <person name="Small K.V."/>
            <person name="Sandusky M."/>
            <person name="Fuhrmann J.L."/>
            <person name="Nguyen D.T."/>
            <person name="Utterback T.R."/>
            <person name="Saudek D.M."/>
            <person name="Phillips C.A."/>
            <person name="Merrick J.M."/>
            <person name="Tomb J.-F."/>
            <person name="Dougherty B.A."/>
            <person name="Bott K.F."/>
            <person name="Hu P.-C."/>
            <person name="Lucier T.S."/>
            <person name="Peterson S.N."/>
            <person name="Smith H.O."/>
            <person name="Hutchison C.A. III"/>
            <person name="Venter J.C."/>
        </authorList>
    </citation>
    <scope>NUCLEOTIDE SEQUENCE [LARGE SCALE GENOMIC DNA]</scope>
    <source>
        <strain>ATCC 33530 / DSM 19775 / NCTC 10195 / G37</strain>
    </source>
</reference>
<keyword id="KW-1003">Cell membrane</keyword>
<keyword id="KW-0449">Lipoprotein</keyword>
<keyword id="KW-0472">Membrane</keyword>
<keyword id="KW-0564">Palmitate</keyword>
<keyword id="KW-1185">Reference proteome</keyword>
<keyword id="KW-0732">Signal</keyword>
<gene>
    <name type="ordered locus">MG439</name>
</gene>
<protein>
    <recommendedName>
        <fullName>Uncharacterized lipoprotein MG439</fullName>
    </recommendedName>
</protein>
<proteinExistence type="inferred from homology"/>
<dbReference type="EMBL" id="L43967">
    <property type="protein sequence ID" value="AAC72459.1"/>
    <property type="molecule type" value="Genomic_DNA"/>
</dbReference>
<dbReference type="PIR" id="E64248">
    <property type="entry name" value="E64248"/>
</dbReference>
<dbReference type="RefSeq" id="WP_009885595.1">
    <property type="nucleotide sequence ID" value="NC_000908.2"/>
</dbReference>
<dbReference type="STRING" id="243273.MG_439"/>
<dbReference type="GeneID" id="88282619"/>
<dbReference type="KEGG" id="mge:MG_439"/>
<dbReference type="eggNOG" id="ENOG5032G6D">
    <property type="taxonomic scope" value="Bacteria"/>
</dbReference>
<dbReference type="HOGENOM" id="CLU_080699_0_0_14"/>
<dbReference type="InParanoid" id="P47677"/>
<dbReference type="OrthoDB" id="403129at2"/>
<dbReference type="BioCyc" id="MGEN243273:G1GJ2-532-MONOMER"/>
<dbReference type="Proteomes" id="UP000000807">
    <property type="component" value="Chromosome"/>
</dbReference>
<dbReference type="GO" id="GO:0005886">
    <property type="term" value="C:plasma membrane"/>
    <property type="evidence" value="ECO:0007669"/>
    <property type="project" value="UniProtKB-SubCell"/>
</dbReference>
<dbReference type="InterPro" id="IPR001595">
    <property type="entry name" value="Lipoprotein_3"/>
</dbReference>
<dbReference type="Pfam" id="PF00938">
    <property type="entry name" value="Lipoprotein_3"/>
    <property type="match status" value="1"/>
</dbReference>
<dbReference type="PROSITE" id="PS51257">
    <property type="entry name" value="PROKAR_LIPOPROTEIN"/>
    <property type="match status" value="1"/>
</dbReference>
<evidence type="ECO:0000255" key="1">
    <source>
        <dbReference type="PROSITE-ProRule" id="PRU00303"/>
    </source>
</evidence>
<evidence type="ECO:0000305" key="2"/>